<name>TRMJ_ECOLI</name>
<gene>
    <name evidence="4" type="primary">trmJ</name>
    <name type="synonym">yfhQ</name>
    <name type="ordered locus">b2532</name>
    <name type="ordered locus">JW2516</name>
</gene>
<comment type="function">
    <text evidence="1 2 3">Catalyzes the formation of 2'O-methylated cytidine (Cm32) or 2'O-methylated uridine (Um32) at position 32 in tRNA (PubMed:16848900, PubMed:24951554, PubMed:26202969). Can also methylate adenosine or guanosine, even though these nucleosides are rare or absent at position 32 in the anticodon loop of tRNA (PubMed:24951554).</text>
</comment>
<comment type="catalytic activity">
    <reaction evidence="1 2 3">
        <text>cytidine(32) in tRNA + S-adenosyl-L-methionine = 2'-O-methylcytidine(32) in tRNA + S-adenosyl-L-homocysteine + H(+)</text>
        <dbReference type="Rhea" id="RHEA:42932"/>
        <dbReference type="Rhea" id="RHEA-COMP:10288"/>
        <dbReference type="Rhea" id="RHEA-COMP:10289"/>
        <dbReference type="ChEBI" id="CHEBI:15378"/>
        <dbReference type="ChEBI" id="CHEBI:57856"/>
        <dbReference type="ChEBI" id="CHEBI:59789"/>
        <dbReference type="ChEBI" id="CHEBI:74495"/>
        <dbReference type="ChEBI" id="CHEBI:82748"/>
        <dbReference type="EC" id="2.1.1.200"/>
    </reaction>
</comment>
<comment type="catalytic activity">
    <reaction evidence="1 2 3">
        <text>uridine(32) in tRNA + S-adenosyl-L-methionine = 2'-O-methyluridine(32) in tRNA + S-adenosyl-L-homocysteine + H(+)</text>
        <dbReference type="Rhea" id="RHEA:42936"/>
        <dbReference type="Rhea" id="RHEA-COMP:10107"/>
        <dbReference type="Rhea" id="RHEA-COMP:10290"/>
        <dbReference type="ChEBI" id="CHEBI:15378"/>
        <dbReference type="ChEBI" id="CHEBI:57856"/>
        <dbReference type="ChEBI" id="CHEBI:59789"/>
        <dbReference type="ChEBI" id="CHEBI:65315"/>
        <dbReference type="ChEBI" id="CHEBI:74478"/>
        <dbReference type="EC" id="2.1.1.200"/>
    </reaction>
</comment>
<comment type="biophysicochemical properties">
    <kinetics>
        <KM evidence="3">0.67 uM for tRNA(fMet1)</KM>
        <KM evidence="3">0.81 uM for tRNA(fMet2)</KM>
        <KM evidence="3">0.94 uM for tRNA(Trp1)</KM>
        <KM evidence="3">9.88 uM for tRNA(Gln1)</KM>
        <KM evidence="3">5.79 uM for tRNA(Gln2)</KM>
        <KM evidence="3">11.82 uM for tRNA(Ser1)</KM>
        <text evidence="3">kcat is 1.52 min(-1) with tRNA(fMet1) as substrate. kcat is 1.42 min(-1) with tRNA(fMet2) as substrate. kcat is 1.31 min(-1) with tRNA(Trp1) as substrate. kcat is 1.20 min(-1) with tRNA(Gln1) as substrate. kcat is 1.41 min(-1) with tRNA(Gln2) as substrate. kcat is 2.30 min(-1) with tRNA(Ser1) as substrate.</text>
    </kinetics>
</comment>
<comment type="subunit">
    <text evidence="1 2 3">Homodimer.</text>
</comment>
<comment type="subcellular location">
    <subcellularLocation>
        <location evidence="5">Cytoplasm</location>
    </subcellularLocation>
</comment>
<comment type="domain">
    <text evidence="3">Both the catalytic N-terminal domain and the extensional C-terminal domain play key roles in tRNA binding and methylation.</text>
</comment>
<comment type="similarity">
    <text evidence="5">Belongs to the class IV-like SAM-binding methyltransferase superfamily. RNA methyltransferase TrmH family.</text>
</comment>
<sequence>MLQNIRIVLVETSHTGNMGSVARAMKTMGLTNLWLVNPLVKPDSQAIALAAGASDVIGNAHIVDTLDEALAGCSLVVGTSARSRTLPWPMLDPRECGLKSVAEAANTPVALVFGRERVGLTNEELQKCHYHVAIAANPEYSSLNLAMAVQVIAYEVRMAWLATQENGEQVEHEETPYPLVDDLERFYGHLEQTLLATGFIRENHPGQVMNKLRRLFTRARPESQELNILRGILASIEQQNKGNKAE</sequence>
<protein>
    <recommendedName>
        <fullName evidence="5">tRNA (cytidine/uridine-2'-O-)-methyltransferase TrmJ</fullName>
        <ecNumber evidence="1 2 3">2.1.1.200</ecNumber>
    </recommendedName>
    <alternativeName>
        <fullName evidence="4">TrMet(Xm32)</fullName>
    </alternativeName>
    <alternativeName>
        <fullName evidence="5">tRNA (cytidine(32)/uridine(32)-2'-O)-methyltransferase</fullName>
    </alternativeName>
    <alternativeName>
        <fullName evidence="5">tRNA Cm32/Um32 methyltransferase</fullName>
    </alternativeName>
</protein>
<keyword id="KW-0002">3D-structure</keyword>
<keyword id="KW-0963">Cytoplasm</keyword>
<keyword id="KW-0489">Methyltransferase</keyword>
<keyword id="KW-1185">Reference proteome</keyword>
<keyword id="KW-0949">S-adenosyl-L-methionine</keyword>
<keyword id="KW-0808">Transferase</keyword>
<keyword id="KW-0819">tRNA processing</keyword>
<organism>
    <name type="scientific">Escherichia coli (strain K12)</name>
    <dbReference type="NCBI Taxonomy" id="83333"/>
    <lineage>
        <taxon>Bacteria</taxon>
        <taxon>Pseudomonadati</taxon>
        <taxon>Pseudomonadota</taxon>
        <taxon>Gammaproteobacteria</taxon>
        <taxon>Enterobacterales</taxon>
        <taxon>Enterobacteriaceae</taxon>
        <taxon>Escherichia</taxon>
    </lineage>
</organism>
<reference key="1">
    <citation type="journal article" date="1997" name="DNA Res.">
        <title>Construction of a contiguous 874-kb sequence of the Escherichia coli-K12 genome corresponding to 50.0-68.8 min on the linkage map and analysis of its sequence features.</title>
        <authorList>
            <person name="Yamamoto Y."/>
            <person name="Aiba H."/>
            <person name="Baba T."/>
            <person name="Hayashi K."/>
            <person name="Inada T."/>
            <person name="Isono K."/>
            <person name="Itoh T."/>
            <person name="Kimura S."/>
            <person name="Kitagawa M."/>
            <person name="Makino K."/>
            <person name="Miki T."/>
            <person name="Mitsuhashi N."/>
            <person name="Mizobuchi K."/>
            <person name="Mori H."/>
            <person name="Nakade S."/>
            <person name="Nakamura Y."/>
            <person name="Nashimoto H."/>
            <person name="Oshima T."/>
            <person name="Oyama S."/>
            <person name="Saito N."/>
            <person name="Sampei G."/>
            <person name="Satoh Y."/>
            <person name="Sivasundaram S."/>
            <person name="Tagami H."/>
            <person name="Takahashi H."/>
            <person name="Takeda J."/>
            <person name="Takemoto K."/>
            <person name="Uehara K."/>
            <person name="Wada C."/>
            <person name="Yamagata S."/>
            <person name="Horiuchi T."/>
        </authorList>
    </citation>
    <scope>NUCLEOTIDE SEQUENCE [LARGE SCALE GENOMIC DNA]</scope>
    <source>
        <strain>K12 / W3110 / ATCC 27325 / DSM 5911</strain>
    </source>
</reference>
<reference key="2">
    <citation type="journal article" date="1997" name="Science">
        <title>The complete genome sequence of Escherichia coli K-12.</title>
        <authorList>
            <person name="Blattner F.R."/>
            <person name="Plunkett G. III"/>
            <person name="Bloch C.A."/>
            <person name="Perna N.T."/>
            <person name="Burland V."/>
            <person name="Riley M."/>
            <person name="Collado-Vides J."/>
            <person name="Glasner J.D."/>
            <person name="Rode C.K."/>
            <person name="Mayhew G.F."/>
            <person name="Gregor J."/>
            <person name="Davis N.W."/>
            <person name="Kirkpatrick H.A."/>
            <person name="Goeden M.A."/>
            <person name="Rose D.J."/>
            <person name="Mau B."/>
            <person name="Shao Y."/>
        </authorList>
    </citation>
    <scope>NUCLEOTIDE SEQUENCE [LARGE SCALE GENOMIC DNA]</scope>
    <source>
        <strain>K12 / MG1655 / ATCC 47076</strain>
    </source>
</reference>
<reference key="3">
    <citation type="journal article" date="2006" name="Mol. Syst. Biol.">
        <title>Highly accurate genome sequences of Escherichia coli K-12 strains MG1655 and W3110.</title>
        <authorList>
            <person name="Hayashi K."/>
            <person name="Morooka N."/>
            <person name="Yamamoto Y."/>
            <person name="Fujita K."/>
            <person name="Isono K."/>
            <person name="Choi S."/>
            <person name="Ohtsubo E."/>
            <person name="Baba T."/>
            <person name="Wanner B.L."/>
            <person name="Mori H."/>
            <person name="Horiuchi T."/>
        </authorList>
    </citation>
    <scope>NUCLEOTIDE SEQUENCE [LARGE SCALE GENOMIC DNA]</scope>
    <source>
        <strain>K12 / W3110 / ATCC 27325 / DSM 5911</strain>
    </source>
</reference>
<reference key="4">
    <citation type="journal article" date="2006" name="BMC Mol. Biol.">
        <title>The yfhQ gene of Escherichia coli encodes a tRNA:Cm32/Um32 methyltransferase.</title>
        <authorList>
            <person name="Purta E."/>
            <person name="van Vliet F."/>
            <person name="Tkaczuk K.L."/>
            <person name="Dunin-Horkawicz S."/>
            <person name="Mori H."/>
            <person name="Droogmans L."/>
            <person name="Bujnicki J.M."/>
        </authorList>
    </citation>
    <scope>FUNCTION</scope>
    <scope>CATALYTIC ACTIVITY</scope>
    <scope>SUBUNIT</scope>
</reference>
<reference evidence="8 9" key="5">
    <citation type="journal article" date="2014" name="RNA">
        <title>Characterization of two homologous 2'-O-methyltransferases showing different specificities for their tRNA substrates.</title>
        <authorList>
            <person name="Somme J."/>
            <person name="Van Laer B."/>
            <person name="Roovers M."/>
            <person name="Steyaert J."/>
            <person name="Versees W."/>
            <person name="Droogmans L."/>
        </authorList>
    </citation>
    <scope>X-RAY CRYSTALLOGRAPHY (1.50 ANGSTROMS) IN COMPLEX WITH S-ADENOSYL-L-HOMOCYSTEINE</scope>
    <scope>FUNCTION</scope>
    <scope>CATALYTIC ACTIVITY</scope>
    <scope>SUBUNIT</scope>
    <scope>MUTAGENESIS OF ARG-23 AND TYR-140</scope>
</reference>
<reference evidence="10" key="6">
    <citation type="journal article" date="2015" name="Nucleic Acids Res.">
        <title>tRNA recognition by a bacterial tRNA Xm32 modification enzyme from the SPOUT methyltransferase superfamily.</title>
        <authorList>
            <person name="Liu R.J."/>
            <person name="Long T."/>
            <person name="Zhou M."/>
            <person name="Zhou X.L."/>
            <person name="Wang E.D."/>
        </authorList>
    </citation>
    <scope>X-RAY CRYSTALLOGRAPHY (2.60 ANGSTROMS) IN COMPLEX WITH S-ADENOSYL-L-HOMOCYSTEINE</scope>
    <scope>FUNCTION</scope>
    <scope>CATALYTIC ACTIVITY</scope>
    <scope>BIOPHYSICOCHEMICAL PROPERTIES</scope>
    <scope>SUBUNIT</scope>
    <scope>DOMAIN</scope>
    <scope>MUTAGENESIS OF ARG-82; ARG-84; ARG-115; HIS-172; THR-175; TYR-177; PHE-199; LYS-211; ARG-213; ARG-214; ARG-218; GLU-225; ILE-228; LEU-229 AND GLY-231</scope>
    <source>
        <strain>K12 / MG1655 / ATCC 47076</strain>
    </source>
</reference>
<evidence type="ECO:0000269" key="1">
    <source>
    </source>
</evidence>
<evidence type="ECO:0000269" key="2">
    <source>
    </source>
</evidence>
<evidence type="ECO:0000269" key="3">
    <source>
    </source>
</evidence>
<evidence type="ECO:0000303" key="4">
    <source>
    </source>
</evidence>
<evidence type="ECO:0000305" key="5"/>
<evidence type="ECO:0000305" key="6">
    <source>
    </source>
</evidence>
<evidence type="ECO:0000305" key="7">
    <source>
    </source>
</evidence>
<evidence type="ECO:0007744" key="8">
    <source>
        <dbReference type="PDB" id="4CND"/>
    </source>
</evidence>
<evidence type="ECO:0007744" key="9">
    <source>
        <dbReference type="PDB" id="4CNE"/>
    </source>
</evidence>
<evidence type="ECO:0007744" key="10">
    <source>
        <dbReference type="PDB" id="4XBO"/>
    </source>
</evidence>
<evidence type="ECO:0007829" key="11">
    <source>
        <dbReference type="PDB" id="4CND"/>
    </source>
</evidence>
<evidence type="ECO:0007829" key="12">
    <source>
        <dbReference type="PDB" id="4XBO"/>
    </source>
</evidence>
<dbReference type="EC" id="2.1.1.200" evidence="1 2 3"/>
<dbReference type="EMBL" id="U00096">
    <property type="protein sequence ID" value="AAC75585.1"/>
    <property type="molecule type" value="Genomic_DNA"/>
</dbReference>
<dbReference type="EMBL" id="AP009048">
    <property type="protein sequence ID" value="BAA16426.1"/>
    <property type="molecule type" value="Genomic_DNA"/>
</dbReference>
<dbReference type="PIR" id="C65030">
    <property type="entry name" value="C65030"/>
</dbReference>
<dbReference type="RefSeq" id="NP_417027.1">
    <property type="nucleotide sequence ID" value="NC_000913.3"/>
</dbReference>
<dbReference type="RefSeq" id="WP_000940019.1">
    <property type="nucleotide sequence ID" value="NZ_SSZK01000005.1"/>
</dbReference>
<dbReference type="PDB" id="4CND">
    <property type="method" value="X-ray"/>
    <property type="resolution" value="1.50 A"/>
    <property type="chains" value="A/B=1-246"/>
</dbReference>
<dbReference type="PDB" id="4CNE">
    <property type="method" value="X-ray"/>
    <property type="resolution" value="1.90 A"/>
    <property type="chains" value="A/B=1-246"/>
</dbReference>
<dbReference type="PDB" id="4XBO">
    <property type="method" value="X-ray"/>
    <property type="resolution" value="2.60 A"/>
    <property type="chains" value="A/B=1-246"/>
</dbReference>
<dbReference type="PDBsum" id="4CND"/>
<dbReference type="PDBsum" id="4CNE"/>
<dbReference type="PDBsum" id="4XBO"/>
<dbReference type="SMR" id="P0AE01"/>
<dbReference type="BioGRID" id="4263050">
    <property type="interactions" value="21"/>
</dbReference>
<dbReference type="BioGRID" id="852903">
    <property type="interactions" value="1"/>
</dbReference>
<dbReference type="FunCoup" id="P0AE01">
    <property type="interactions" value="219"/>
</dbReference>
<dbReference type="IntAct" id="P0AE01">
    <property type="interactions" value="3"/>
</dbReference>
<dbReference type="STRING" id="511145.b2532"/>
<dbReference type="jPOST" id="P0AE01"/>
<dbReference type="PaxDb" id="511145-b2532"/>
<dbReference type="EnsemblBacteria" id="AAC75585">
    <property type="protein sequence ID" value="AAC75585"/>
    <property type="gene ID" value="b2532"/>
</dbReference>
<dbReference type="GeneID" id="86860658"/>
<dbReference type="GeneID" id="948610"/>
<dbReference type="KEGG" id="ecj:JW2516"/>
<dbReference type="KEGG" id="eco:b2532"/>
<dbReference type="KEGG" id="ecoc:C3026_14030"/>
<dbReference type="PATRIC" id="fig|511145.12.peg.2633"/>
<dbReference type="EchoBASE" id="EB3225"/>
<dbReference type="eggNOG" id="COG0565">
    <property type="taxonomic scope" value="Bacteria"/>
</dbReference>
<dbReference type="HOGENOM" id="CLU_056931_0_1_6"/>
<dbReference type="InParanoid" id="P0AE01"/>
<dbReference type="OMA" id="ARVMKNM"/>
<dbReference type="OrthoDB" id="9806346at2"/>
<dbReference type="PhylomeDB" id="P0AE01"/>
<dbReference type="BioCyc" id="EcoCyc:G7327-MONOMER"/>
<dbReference type="BioCyc" id="MetaCyc:G7327-MONOMER"/>
<dbReference type="BRENDA" id="2.1.1.200">
    <property type="organism ID" value="2026"/>
</dbReference>
<dbReference type="EvolutionaryTrace" id="P0AE01"/>
<dbReference type="PRO" id="PR:P0AE01"/>
<dbReference type="Proteomes" id="UP000000625">
    <property type="component" value="Chromosome"/>
</dbReference>
<dbReference type="GO" id="GO:0005829">
    <property type="term" value="C:cytosol"/>
    <property type="evidence" value="ECO:0000314"/>
    <property type="project" value="EcoCyc"/>
</dbReference>
<dbReference type="GO" id="GO:0042803">
    <property type="term" value="F:protein homodimerization activity"/>
    <property type="evidence" value="ECO:0000314"/>
    <property type="project" value="EcoCyc"/>
</dbReference>
<dbReference type="GO" id="GO:0003723">
    <property type="term" value="F:RNA binding"/>
    <property type="evidence" value="ECO:0007669"/>
    <property type="project" value="InterPro"/>
</dbReference>
<dbReference type="GO" id="GO:0160206">
    <property type="term" value="F:tRNA (cytidine(32)/uridine(32)-2'-O)-methyltransferase activity"/>
    <property type="evidence" value="ECO:0007669"/>
    <property type="project" value="UniProtKB-EC"/>
</dbReference>
<dbReference type="GO" id="GO:0002128">
    <property type="term" value="P:tRNA nucleoside ribose methylation"/>
    <property type="evidence" value="ECO:0000315"/>
    <property type="project" value="EcoCyc"/>
</dbReference>
<dbReference type="CDD" id="cd18093">
    <property type="entry name" value="SpoU-like_TrmJ"/>
    <property type="match status" value="1"/>
</dbReference>
<dbReference type="FunFam" id="1.10.8.590:FF:000001">
    <property type="entry name" value="tRNA:Cm32/Um32 methyltransferase"/>
    <property type="match status" value="1"/>
</dbReference>
<dbReference type="FunFam" id="3.40.1280.10:FF:000006">
    <property type="entry name" value="Uncharacterized tRNA/rRNA methyltransferase HI_0380"/>
    <property type="match status" value="1"/>
</dbReference>
<dbReference type="Gene3D" id="1.10.8.590">
    <property type="match status" value="1"/>
</dbReference>
<dbReference type="Gene3D" id="3.40.1280.10">
    <property type="match status" value="1"/>
</dbReference>
<dbReference type="InterPro" id="IPR029028">
    <property type="entry name" value="Alpha/beta_knot_MTases"/>
</dbReference>
<dbReference type="InterPro" id="IPR004384">
    <property type="entry name" value="RNA_MeTrfase_TrmJ/LasT"/>
</dbReference>
<dbReference type="InterPro" id="IPR001537">
    <property type="entry name" value="SpoU_MeTrfase"/>
</dbReference>
<dbReference type="InterPro" id="IPR029026">
    <property type="entry name" value="tRNA_m1G_MTases_N"/>
</dbReference>
<dbReference type="NCBIfam" id="NF011694">
    <property type="entry name" value="PRK15114.1"/>
    <property type="match status" value="1"/>
</dbReference>
<dbReference type="NCBIfam" id="TIGR00050">
    <property type="entry name" value="rRNA_methyl_1"/>
    <property type="match status" value="1"/>
</dbReference>
<dbReference type="PANTHER" id="PTHR42786:SF2">
    <property type="entry name" value="TRNA (CYTIDINE_URIDINE-2'-O-)-METHYLTRANSFERASE TRMJ"/>
    <property type="match status" value="1"/>
</dbReference>
<dbReference type="PANTHER" id="PTHR42786">
    <property type="entry name" value="TRNA/RRNA METHYLTRANSFERASE"/>
    <property type="match status" value="1"/>
</dbReference>
<dbReference type="Pfam" id="PF00588">
    <property type="entry name" value="SpoU_methylase"/>
    <property type="match status" value="1"/>
</dbReference>
<dbReference type="PIRSF" id="PIRSF004808">
    <property type="entry name" value="LasT"/>
    <property type="match status" value="1"/>
</dbReference>
<dbReference type="SUPFAM" id="SSF75217">
    <property type="entry name" value="alpha/beta knot"/>
    <property type="match status" value="1"/>
</dbReference>
<feature type="chain" id="PRO_0000159824" description="tRNA (cytidine/uridine-2'-O-)-methyltransferase TrmJ">
    <location>
        <begin position="1"/>
        <end position="246"/>
    </location>
</feature>
<feature type="binding site" evidence="6 7">
    <location>
        <begin position="79"/>
        <end position="81"/>
    </location>
    <ligand>
        <name>S-adenosyl-L-methionine</name>
        <dbReference type="ChEBI" id="CHEBI:59789"/>
    </ligand>
</feature>
<feature type="binding site" evidence="6 7">
    <location>
        <position position="114"/>
    </location>
    <ligand>
        <name>S-adenosyl-L-methionine</name>
        <dbReference type="ChEBI" id="CHEBI:59789"/>
    </ligand>
</feature>
<feature type="binding site" evidence="6 7">
    <location>
        <position position="134"/>
    </location>
    <ligand>
        <name>S-adenosyl-L-methionine</name>
        <dbReference type="ChEBI" id="CHEBI:59789"/>
    </ligand>
</feature>
<feature type="binding site" evidence="6 7">
    <location>
        <begin position="141"/>
        <end position="143"/>
    </location>
    <ligand>
        <name>S-adenosyl-L-methionine</name>
        <dbReference type="ChEBI" id="CHEBI:59789"/>
    </ligand>
</feature>
<feature type="mutagenesis site" description="Loss of activity." evidence="2">
    <original>R</original>
    <variation>A</variation>
    <location>
        <position position="23"/>
    </location>
</feature>
<feature type="mutagenesis site" description="Loss of tRNA binding affinity. Loss of activity." evidence="3">
    <original>R</original>
    <variation>A</variation>
    <location>
        <position position="82"/>
    </location>
</feature>
<feature type="mutagenesis site" description="Loss of tRNA binding affinity. Loss of activity." evidence="3">
    <original>R</original>
    <variation>A</variation>
    <location>
        <position position="84"/>
    </location>
</feature>
<feature type="mutagenesis site" description="No change in tRNA binding affinity. No change in activity." evidence="3">
    <original>R</original>
    <variation>A</variation>
    <location>
        <position position="115"/>
    </location>
</feature>
<feature type="mutagenesis site" description="Strong decrease in activity." evidence="2">
    <original>Y</original>
    <variation>F</variation>
    <location>
        <position position="140"/>
    </location>
</feature>
<feature type="mutagenesis site" description="No change in activity." evidence="3">
    <original>H</original>
    <variation>A</variation>
    <location>
        <position position="172"/>
    </location>
</feature>
<feature type="mutagenesis site" description="No change in activity." evidence="3">
    <original>T</original>
    <variation>A</variation>
    <location>
        <position position="175"/>
    </location>
</feature>
<feature type="mutagenesis site" description="No change in activity." evidence="3">
    <original>Y</original>
    <variation>A</variation>
    <location>
        <position position="177"/>
    </location>
</feature>
<feature type="mutagenesis site" description="Strong decrease in activity." evidence="3">
    <original>F</original>
    <variation>A</variation>
    <location>
        <position position="199"/>
    </location>
</feature>
<feature type="mutagenesis site" description="Strong decrease in tRNA binding affinity. Strong decrease in activity." evidence="3">
    <original>K</original>
    <variation>A</variation>
    <location>
        <position position="211"/>
    </location>
</feature>
<feature type="mutagenesis site" description="Strong decrease in tRNA binding affinity. Loss of activity." evidence="3">
    <original>R</original>
    <variation>A</variation>
    <location>
        <position position="213"/>
    </location>
</feature>
<feature type="mutagenesis site" description="Strong decrease in tRNA binding affinity. Strong decrease in activity." evidence="3">
    <original>R</original>
    <variation>A</variation>
    <location>
        <position position="214"/>
    </location>
</feature>
<feature type="mutagenesis site" description="Strong decrease in tRNA binding affinity. Strong decrease in activity." evidence="3">
    <original>R</original>
    <variation>A</variation>
    <location>
        <position position="218"/>
    </location>
</feature>
<feature type="mutagenesis site" description="Loss of activity." evidence="3">
    <original>E</original>
    <variation>A</variation>
    <location>
        <position position="225"/>
    </location>
</feature>
<feature type="mutagenesis site" description="Strong decrease in activity." evidence="3">
    <original>I</original>
    <variation>A</variation>
    <location>
        <position position="228"/>
    </location>
</feature>
<feature type="mutagenesis site" description="Loss of activity." evidence="3">
    <original>L</original>
    <variation>A</variation>
    <location>
        <position position="229"/>
    </location>
</feature>
<feature type="mutagenesis site" description="Loss of activity." evidence="3">
    <original>G</original>
    <variation>A</variation>
    <location>
        <position position="231"/>
    </location>
</feature>
<feature type="helix" evidence="12">
    <location>
        <begin position="2"/>
        <end position="4"/>
    </location>
</feature>
<feature type="strand" evidence="11">
    <location>
        <begin position="5"/>
        <end position="11"/>
    </location>
</feature>
<feature type="helix" evidence="11">
    <location>
        <begin position="15"/>
        <end position="27"/>
    </location>
</feature>
<feature type="strand" evidence="11">
    <location>
        <begin position="32"/>
        <end position="37"/>
    </location>
</feature>
<feature type="helix" evidence="11">
    <location>
        <begin position="44"/>
        <end position="50"/>
    </location>
</feature>
<feature type="helix" evidence="11">
    <location>
        <begin position="51"/>
        <end position="53"/>
    </location>
</feature>
<feature type="helix" evidence="11">
    <location>
        <begin position="54"/>
        <end position="58"/>
    </location>
</feature>
<feature type="strand" evidence="11">
    <location>
        <begin position="61"/>
        <end position="64"/>
    </location>
</feature>
<feature type="helix" evidence="11">
    <location>
        <begin position="66"/>
        <end position="70"/>
    </location>
</feature>
<feature type="strand" evidence="11">
    <location>
        <begin position="74"/>
        <end position="79"/>
    </location>
</feature>
<feature type="strand" evidence="11">
    <location>
        <begin position="84"/>
        <end position="86"/>
    </location>
</feature>
<feature type="helix" evidence="11">
    <location>
        <begin position="93"/>
        <end position="104"/>
    </location>
</feature>
<feature type="strand" evidence="11">
    <location>
        <begin position="109"/>
        <end position="113"/>
    </location>
</feature>
<feature type="turn" evidence="11">
    <location>
        <begin position="116"/>
        <end position="118"/>
    </location>
</feature>
<feature type="helix" evidence="11">
    <location>
        <begin position="122"/>
        <end position="125"/>
    </location>
</feature>
<feature type="strand" evidence="11">
    <location>
        <begin position="129"/>
        <end position="132"/>
    </location>
</feature>
<feature type="helix" evidence="11">
    <location>
        <begin position="145"/>
        <end position="162"/>
    </location>
</feature>
<feature type="helix" evidence="12">
    <location>
        <begin position="180"/>
        <end position="196"/>
    </location>
</feature>
<feature type="helix" evidence="12">
    <location>
        <begin position="207"/>
        <end position="218"/>
    </location>
</feature>
<feature type="helix" evidence="12">
    <location>
        <begin position="223"/>
        <end position="237"/>
    </location>
</feature>
<accession>P0AE01</accession>
<accession>P76993</accession>
<accession>P77438</accession>
<proteinExistence type="evidence at protein level"/>